<gene>
    <name type="primary">CD19</name>
</gene>
<dbReference type="EMBL" id="M21097">
    <property type="protein sequence ID" value="AAA35533.1"/>
    <property type="status" value="ALT_FRAME"/>
    <property type="molecule type" value="mRNA"/>
</dbReference>
<dbReference type="EMBL" id="M28170">
    <property type="protein sequence ID" value="AAA68490.1"/>
    <property type="molecule type" value="mRNA"/>
</dbReference>
<dbReference type="EMBL" id="M84371">
    <property type="protein sequence ID" value="AAA69966.1"/>
    <property type="molecule type" value="Genomic_DNA"/>
</dbReference>
<dbReference type="EMBL" id="M62550">
    <property type="protein sequence ID" value="AAB60697.1"/>
    <property type="molecule type" value="Genomic_DNA"/>
</dbReference>
<dbReference type="EMBL" id="M62544">
    <property type="protein sequence ID" value="AAB60697.1"/>
    <property type="status" value="JOINED"/>
    <property type="molecule type" value="Genomic_DNA"/>
</dbReference>
<dbReference type="EMBL" id="M62545">
    <property type="protein sequence ID" value="AAB60697.1"/>
    <property type="status" value="JOINED"/>
    <property type="molecule type" value="Genomic_DNA"/>
</dbReference>
<dbReference type="EMBL" id="M62546">
    <property type="protein sequence ID" value="AAB60697.1"/>
    <property type="status" value="JOINED"/>
    <property type="molecule type" value="Genomic_DNA"/>
</dbReference>
<dbReference type="EMBL" id="M62547">
    <property type="protein sequence ID" value="AAB60697.1"/>
    <property type="status" value="JOINED"/>
    <property type="molecule type" value="Genomic_DNA"/>
</dbReference>
<dbReference type="EMBL" id="M62548">
    <property type="protein sequence ID" value="AAB60697.1"/>
    <property type="status" value="JOINED"/>
    <property type="molecule type" value="Genomic_DNA"/>
</dbReference>
<dbReference type="EMBL" id="M62549">
    <property type="protein sequence ID" value="AAB60697.1"/>
    <property type="status" value="JOINED"/>
    <property type="molecule type" value="Genomic_DNA"/>
</dbReference>
<dbReference type="EMBL" id="AB052799">
    <property type="protein sequence ID" value="BAB60954.1"/>
    <property type="molecule type" value="Genomic_DNA"/>
</dbReference>
<dbReference type="EMBL" id="AK313577">
    <property type="status" value="NOT_ANNOTATED_CDS"/>
    <property type="molecule type" value="mRNA"/>
</dbReference>
<dbReference type="EMBL" id="EF064757">
    <property type="protein sequence ID" value="ABK41940.1"/>
    <property type="molecule type" value="Genomic_DNA"/>
</dbReference>
<dbReference type="EMBL" id="AC109460">
    <property type="status" value="NOT_ANNOTATED_CDS"/>
    <property type="molecule type" value="Genomic_DNA"/>
</dbReference>
<dbReference type="EMBL" id="CH471267">
    <property type="protein sequence ID" value="EAW52012.1"/>
    <property type="molecule type" value="Genomic_DNA"/>
</dbReference>
<dbReference type="EMBL" id="BC006338">
    <property type="protein sequence ID" value="AAH06338.1"/>
    <property type="molecule type" value="mRNA"/>
</dbReference>
<dbReference type="CCDS" id="CCDS10644.1">
    <molecule id="P15391-1"/>
</dbReference>
<dbReference type="CCDS" id="CCDS53998.1">
    <molecule id="P15391-2"/>
</dbReference>
<dbReference type="PIR" id="A44441">
    <property type="entry name" value="A44441"/>
</dbReference>
<dbReference type="RefSeq" id="NP_001171569.1">
    <molecule id="P15391-2"/>
    <property type="nucleotide sequence ID" value="NM_001178098.2"/>
</dbReference>
<dbReference type="RefSeq" id="NP_001761.3">
    <molecule id="P15391-1"/>
    <property type="nucleotide sequence ID" value="NM_001770.5"/>
</dbReference>
<dbReference type="PDB" id="6AL5">
    <property type="method" value="X-ray"/>
    <property type="resolution" value="3.00 A"/>
    <property type="chains" value="A=21-277"/>
</dbReference>
<dbReference type="PDB" id="7JIC">
    <property type="method" value="EM"/>
    <property type="resolution" value="3.80 A"/>
    <property type="chains" value="A=20-327"/>
</dbReference>
<dbReference type="PDB" id="7URV">
    <property type="method" value="EM"/>
    <property type="resolution" value="3.05 A"/>
    <property type="chains" value="C=21-277"/>
</dbReference>
<dbReference type="PDB" id="7URX">
    <property type="method" value="EM"/>
    <property type="resolution" value="3.40 A"/>
    <property type="chains" value="C=1-278"/>
</dbReference>
<dbReference type="PDBsum" id="6AL5"/>
<dbReference type="PDBsum" id="7JIC"/>
<dbReference type="PDBsum" id="7URV"/>
<dbReference type="PDBsum" id="7URX"/>
<dbReference type="EMDB" id="EMD-22344"/>
<dbReference type="EMDB" id="EMD-26719"/>
<dbReference type="EMDB" id="EMD-26720"/>
<dbReference type="SMR" id="P15391"/>
<dbReference type="BioGRID" id="107368">
    <property type="interactions" value="21"/>
</dbReference>
<dbReference type="CORUM" id="P15391"/>
<dbReference type="ELM" id="P15391"/>
<dbReference type="FunCoup" id="P15391">
    <property type="interactions" value="546"/>
</dbReference>
<dbReference type="IntAct" id="P15391">
    <property type="interactions" value="14"/>
</dbReference>
<dbReference type="MINT" id="P15391"/>
<dbReference type="STRING" id="9606.ENSP00000313419"/>
<dbReference type="ChEMBL" id="CHEMBL3390821"/>
<dbReference type="DrugBank" id="DB13915">
    <property type="generic name" value="Axicabtagene ciloleucel"/>
</dbReference>
<dbReference type="DrugBank" id="DB09052">
    <property type="generic name" value="Blinatumomab"/>
</dbReference>
<dbReference type="DrugBank" id="DB15699">
    <property type="generic name" value="Brexucabtagene autoleucel"/>
</dbReference>
<dbReference type="DrugBank" id="DB06342">
    <property type="generic name" value="Coltuximab ravtansine"/>
</dbReference>
<dbReference type="DrugBank" id="DB11731">
    <property type="generic name" value="Depatuxizumab mafodotin"/>
</dbReference>
<dbReference type="DrugBank" id="DB12530">
    <property type="generic name" value="Inebilizumab"/>
</dbReference>
<dbReference type="DrugBank" id="DB16582">
    <property type="generic name" value="Lisocabtagene maraleucel"/>
</dbReference>
<dbReference type="DrugBank" id="DB16222">
    <property type="generic name" value="Loncastuximab tesirine"/>
</dbReference>
<dbReference type="DrugBank" id="DB15044">
    <property type="generic name" value="Tafasitamab"/>
</dbReference>
<dbReference type="DrugBank" id="DB13881">
    <property type="generic name" value="Tisagenlecleucel"/>
</dbReference>
<dbReference type="DrugCentral" id="P15391"/>
<dbReference type="GuidetoPHARMACOLOGY" id="2764"/>
<dbReference type="GlyCosmos" id="P15391">
    <property type="glycosylation" value="5 sites, No reported glycans"/>
</dbReference>
<dbReference type="GlyGen" id="P15391">
    <property type="glycosylation" value="6 sites"/>
</dbReference>
<dbReference type="iPTMnet" id="P15391"/>
<dbReference type="PhosphoSitePlus" id="P15391"/>
<dbReference type="BioMuta" id="CD19"/>
<dbReference type="DMDM" id="160332376"/>
<dbReference type="MassIVE" id="P15391"/>
<dbReference type="PaxDb" id="9606-ENSP00000437940"/>
<dbReference type="PeptideAtlas" id="P15391"/>
<dbReference type="ProteomicsDB" id="27066"/>
<dbReference type="ProteomicsDB" id="53135">
    <molecule id="P15391-1"/>
</dbReference>
<dbReference type="ABCD" id="P15391">
    <property type="antibodies" value="71 sequenced antibodies"/>
</dbReference>
<dbReference type="Antibodypedia" id="4237">
    <property type="antibodies" value="5337 antibodies from 56 providers"/>
</dbReference>
<dbReference type="DNASU" id="930"/>
<dbReference type="Ensembl" id="ENST00000324662.8">
    <molecule id="P15391-2"/>
    <property type="protein sequence ID" value="ENSP00000313419.4"/>
    <property type="gene ID" value="ENSG00000177455.15"/>
</dbReference>
<dbReference type="Ensembl" id="ENST00000538922.8">
    <molecule id="P15391-1"/>
    <property type="protein sequence ID" value="ENSP00000437940.2"/>
    <property type="gene ID" value="ENSG00000177455.15"/>
</dbReference>
<dbReference type="GeneID" id="930"/>
<dbReference type="KEGG" id="hsa:930"/>
<dbReference type="MANE-Select" id="ENST00000538922.8">
    <property type="protein sequence ID" value="ENSP00000437940.2"/>
    <property type="RefSeq nucleotide sequence ID" value="NM_001770.6"/>
    <property type="RefSeq protein sequence ID" value="NP_001761.3"/>
</dbReference>
<dbReference type="UCSC" id="uc002drs.4">
    <molecule id="P15391-1"/>
    <property type="organism name" value="human"/>
</dbReference>
<dbReference type="AGR" id="HGNC:1633"/>
<dbReference type="CTD" id="930"/>
<dbReference type="DisGeNET" id="930"/>
<dbReference type="GeneCards" id="CD19"/>
<dbReference type="HGNC" id="HGNC:1633">
    <property type="gene designation" value="CD19"/>
</dbReference>
<dbReference type="HPA" id="ENSG00000177455">
    <property type="expression patterns" value="Group enriched (intestine, lymphoid tissue)"/>
</dbReference>
<dbReference type="MalaCards" id="CD19"/>
<dbReference type="MIM" id="107265">
    <property type="type" value="gene"/>
</dbReference>
<dbReference type="MIM" id="613493">
    <property type="type" value="phenotype"/>
</dbReference>
<dbReference type="neXtProt" id="NX_P15391"/>
<dbReference type="OpenTargets" id="ENSG00000177455"/>
<dbReference type="Orphanet" id="1572">
    <property type="disease" value="Common variable immunodeficiency"/>
</dbReference>
<dbReference type="PharmGKB" id="PA26192"/>
<dbReference type="VEuPathDB" id="HostDB:ENSG00000177455"/>
<dbReference type="eggNOG" id="ENOG502STG8">
    <property type="taxonomic scope" value="Eukaryota"/>
</dbReference>
<dbReference type="GeneTree" id="ENSGT00390000014991"/>
<dbReference type="HOGENOM" id="CLU_038774_0_0_1"/>
<dbReference type="InParanoid" id="P15391"/>
<dbReference type="OMA" id="ENMENPE"/>
<dbReference type="OrthoDB" id="9449216at2759"/>
<dbReference type="PAN-GO" id="P15391">
    <property type="GO annotations" value="2 GO annotations based on evolutionary models"/>
</dbReference>
<dbReference type="PhylomeDB" id="P15391"/>
<dbReference type="TreeFam" id="TF338293"/>
<dbReference type="PathwayCommons" id="P15391"/>
<dbReference type="Reactome" id="R-HSA-1257604">
    <property type="pathway name" value="PIP3 activates AKT signaling"/>
</dbReference>
<dbReference type="Reactome" id="R-HSA-198933">
    <property type="pathway name" value="Immunoregulatory interactions between a Lymphoid and a non-Lymphoid cell"/>
</dbReference>
<dbReference type="Reactome" id="R-HSA-2219530">
    <property type="pathway name" value="Constitutive Signaling by Aberrant PI3K in Cancer"/>
</dbReference>
<dbReference type="Reactome" id="R-HSA-6811558">
    <property type="pathway name" value="PI5P, PP2A and IER3 Regulate PI3K/AKT Signaling"/>
</dbReference>
<dbReference type="Reactome" id="R-HSA-977606">
    <property type="pathway name" value="Regulation of Complement cascade"/>
</dbReference>
<dbReference type="Reactome" id="R-HSA-983695">
    <property type="pathway name" value="Antigen activates B Cell Receptor (BCR) leading to generation of second messengers"/>
</dbReference>
<dbReference type="SignaLink" id="P15391"/>
<dbReference type="SIGNOR" id="P15391"/>
<dbReference type="BioGRID-ORCS" id="930">
    <property type="hits" value="20 hits in 1153 CRISPR screens"/>
</dbReference>
<dbReference type="ChiTaRS" id="CD19">
    <property type="organism name" value="human"/>
</dbReference>
<dbReference type="GeneWiki" id="CD19"/>
<dbReference type="GenomeRNAi" id="930"/>
<dbReference type="Pharos" id="P15391">
    <property type="development level" value="Tclin"/>
</dbReference>
<dbReference type="PRO" id="PR:P15391"/>
<dbReference type="Proteomes" id="UP000005640">
    <property type="component" value="Chromosome 16"/>
</dbReference>
<dbReference type="RNAct" id="P15391">
    <property type="molecule type" value="protein"/>
</dbReference>
<dbReference type="Bgee" id="ENSG00000177455">
    <property type="expression patterns" value="Expressed in spleen and 124 other cell types or tissues"/>
</dbReference>
<dbReference type="GO" id="GO:0009897">
    <property type="term" value="C:external side of plasma membrane"/>
    <property type="evidence" value="ECO:0000314"/>
    <property type="project" value="MGI"/>
</dbReference>
<dbReference type="GO" id="GO:0070062">
    <property type="term" value="C:extracellular exosome"/>
    <property type="evidence" value="ECO:0007005"/>
    <property type="project" value="UniProtKB"/>
</dbReference>
<dbReference type="GO" id="GO:0045121">
    <property type="term" value="C:membrane raft"/>
    <property type="evidence" value="ECO:0007669"/>
    <property type="project" value="UniProtKB-SubCell"/>
</dbReference>
<dbReference type="GO" id="GO:0005886">
    <property type="term" value="C:plasma membrane"/>
    <property type="evidence" value="ECO:0000314"/>
    <property type="project" value="UniProtKB"/>
</dbReference>
<dbReference type="GO" id="GO:0032991">
    <property type="term" value="C:protein-containing complex"/>
    <property type="evidence" value="ECO:0000314"/>
    <property type="project" value="MGI"/>
</dbReference>
<dbReference type="GO" id="GO:0050851">
    <property type="term" value="P:antigen receptor-mediated signaling pathway"/>
    <property type="evidence" value="ECO:0000314"/>
    <property type="project" value="UniProtKB"/>
</dbReference>
<dbReference type="GO" id="GO:0002322">
    <property type="term" value="P:B cell proliferation involved in immune response"/>
    <property type="evidence" value="ECO:0000314"/>
    <property type="project" value="UniProtKB"/>
</dbReference>
<dbReference type="GO" id="GO:0050853">
    <property type="term" value="P:B cell receptor signaling pathway"/>
    <property type="evidence" value="ECO:0000250"/>
    <property type="project" value="UniProtKB"/>
</dbReference>
<dbReference type="GO" id="GO:0001923">
    <property type="term" value="P:B-1 B cell differentiation"/>
    <property type="evidence" value="ECO:0007669"/>
    <property type="project" value="Ensembl"/>
</dbReference>
<dbReference type="GO" id="GO:0016064">
    <property type="term" value="P:immunoglobulin mediated immune response"/>
    <property type="evidence" value="ECO:0000315"/>
    <property type="project" value="UniProtKB"/>
</dbReference>
<dbReference type="GO" id="GO:0051897">
    <property type="term" value="P:positive regulation of phosphatidylinositol 3-kinase/protein kinase B signal transduction"/>
    <property type="evidence" value="ECO:0000315"/>
    <property type="project" value="UniProtKB"/>
</dbReference>
<dbReference type="GO" id="GO:0051281">
    <property type="term" value="P:positive regulation of release of sequestered calcium ion into cytosol"/>
    <property type="evidence" value="ECO:0000314"/>
    <property type="project" value="UniProtKB"/>
</dbReference>
<dbReference type="GO" id="GO:0050864">
    <property type="term" value="P:regulation of B cell activation"/>
    <property type="evidence" value="ECO:0000314"/>
    <property type="project" value="UniProtKB"/>
</dbReference>
<dbReference type="GO" id="GO:0050855">
    <property type="term" value="P:regulation of B cell receptor signaling pathway"/>
    <property type="evidence" value="ECO:0000315"/>
    <property type="project" value="UniProtKB"/>
</dbReference>
<dbReference type="CDD" id="cd23999">
    <property type="entry name" value="CD19_protodomain_1_2"/>
    <property type="match status" value="1"/>
</dbReference>
<dbReference type="CDD" id="cd23998">
    <property type="entry name" value="CD19_protodomain_3_4"/>
    <property type="match status" value="1"/>
</dbReference>
<dbReference type="DisProt" id="DP02431"/>
<dbReference type="Gene3D" id="2.60.40.10">
    <property type="entry name" value="Immunoglobulins"/>
    <property type="match status" value="1"/>
</dbReference>
<dbReference type="InterPro" id="IPR042341">
    <property type="entry name" value="CD19"/>
</dbReference>
<dbReference type="InterPro" id="IPR007110">
    <property type="entry name" value="Ig-like_dom"/>
</dbReference>
<dbReference type="InterPro" id="IPR036179">
    <property type="entry name" value="Ig-like_dom_sf"/>
</dbReference>
<dbReference type="InterPro" id="IPR013783">
    <property type="entry name" value="Ig-like_fold"/>
</dbReference>
<dbReference type="InterPro" id="IPR003599">
    <property type="entry name" value="Ig_sub"/>
</dbReference>
<dbReference type="PANTHER" id="PTHR16674">
    <property type="entry name" value="B-LYMPHOCYTE ANTIGEN CD19"/>
    <property type="match status" value="1"/>
</dbReference>
<dbReference type="PANTHER" id="PTHR16674:SF2">
    <property type="entry name" value="B-LYMPHOCYTE ANTIGEN CD19"/>
    <property type="match status" value="1"/>
</dbReference>
<dbReference type="SMART" id="SM00409">
    <property type="entry name" value="IG"/>
    <property type="match status" value="2"/>
</dbReference>
<dbReference type="SUPFAM" id="SSF48726">
    <property type="entry name" value="Immunoglobulin"/>
    <property type="match status" value="2"/>
</dbReference>
<dbReference type="PROSITE" id="PS50835">
    <property type="entry name" value="IG_LIKE"/>
    <property type="match status" value="2"/>
</dbReference>
<comment type="function">
    <text evidence="1 6 8 13 16 19 23 24">Functions as a coreceptor for the B-cell antigen receptor complex (BCR) on B-lymphocytes (PubMed:29523808). Decreases the threshold for activation of downstream signaling pathways and for triggering B-cell responses to antigens (PubMed:1373518, PubMed:16672701, PubMed:2463100). Activates signaling pathways that lead to the activation of phosphatidylinositol 3-kinase and the mobilization of intracellular Ca(2+) stores (PubMed:12387743, PubMed:16672701, PubMed:9317126, PubMed:9382888). Is not required for early steps during B cell differentiation in the blood marrow (PubMed:9317126). Required for normal differentiation of B-1 cells (By similarity). Required for normal B cell differentiation and proliferation in response to antigen challenges (PubMed:1373518, PubMed:2463100). Required for normal levels of serum immunoglobulins, and for production of high-affinity antibodies in response to antigen challenge (PubMed:12387743, PubMed:16672701, PubMed:9317126).</text>
</comment>
<comment type="subunit">
    <text evidence="4 10 12 14 19 20 21">Interacts with CR2/CD21 (PubMed:1702139). Part of a complex composed of CD19, CR2/CD21, CD81 and IFITM1/CD225 in the membrane of mature B-cells (PubMed:1383329). Interacts directly with CD81 (via the second extracellular domain); this interaction is initiated early during biosynthesis in the ER/pre-Golgi compartments and is essential for trafficking and compartmentalization of CD19 receptor on the cell surface of activated B cells (PubMed:16449649). Interacts with VAV (PubMed:10706702). Interacts with GRB2 and SOS when phosphorylated on Tyr-348 and/or Tyr-378. Interacts with PLCG2 when phosphorylated on Tyr-409 (PubMed:10706702). Interacts with LYN (PubMed:7687428). Interacts (when tyrosine phosphorylated) with the regulatory p85 subunit of phosphatidylinositol 3-kinase (PIK3R1 or PIK3R2) (PubMed:7684160). Interacts with GRB2 (PubMed:29523808).</text>
</comment>
<comment type="subcellular location">
    <subcellularLocation>
        <location evidence="8 10 13 14 16 23 24">Cell membrane</location>
        <topology evidence="28">Single-pass type I membrane protein</topology>
    </subcellularLocation>
    <subcellularLocation>
        <location evidence="1">Membrane raft</location>
        <topology evidence="1">Single-pass type I membrane protein</topology>
    </subcellularLocation>
</comment>
<comment type="alternative products">
    <event type="alternative splicing"/>
    <isoform>
        <id>P15391-1</id>
        <name>1</name>
        <sequence type="displayed"/>
    </isoform>
    <isoform>
        <id>P15391-2</id>
        <name>2</name>
        <sequence type="described" ref="VSP_047194"/>
    </isoform>
</comment>
<comment type="tissue specificity">
    <text evidence="13 16">Detected on marginal zone and germinal center B cells in lymph nodes (PubMed:2463100). Detected on blood B cells (at protein level) (PubMed:16672701, PubMed:2463100).</text>
</comment>
<comment type="PTM">
    <text evidence="1 4 6 20 21 22">Phosphorylated on tyrosine following B-cell activation (PubMed:10706702, PubMed:12387743, PubMed:7684160, PubMed:7687539). Phosphorylated on tyrosine residues by LYN (PubMed:7687428). Tyrosine residues are phosphorylated sequentially after activation of the B cell receptor. Phosphorylation of Tyr-531 is extremely rapid, followed by phosphorylation at Tyr-409. In contrast, phosphorylation of Tyr-500 appears more slowly and is more transient, returning rapidly to basal levels (By similarity).</text>
</comment>
<comment type="disease" evidence="13">
    <disease id="DI-02800">
        <name>Immunodeficiency, common variable, 3</name>
        <acronym>CVID3</acronym>
        <description>A primary immunodeficiency characterized by antibody deficiency, hypogammaglobulinemia, recurrent bacterial infections and an inability to mount an antibody response to antigen. The defect results from a failure of B-cell differentiation and impaired secretion of immunoglobulins; the numbers of circulating B-cells is usually in the normal range, but can be low.</description>
        <dbReference type="MIM" id="613493"/>
    </disease>
    <text>The disease is caused by variants affecting the gene represented in this entry.</text>
</comment>
<comment type="sequence caution" evidence="28">
    <conflict type="frameshift">
        <sequence resource="EMBL-CDS" id="AAA35533"/>
    </conflict>
</comment>
<comment type="online information" name="CD19base">
    <link uri="https://databases.lovd.nl/shared/genes/CD19"/>
    <text>CD19 mutation db</text>
</comment>
<keyword id="KW-0002">3D-structure</keyword>
<keyword id="KW-1064">Adaptive immunity</keyword>
<keyword id="KW-0025">Alternative splicing</keyword>
<keyword id="KW-1003">Cell membrane</keyword>
<keyword id="KW-1015">Disulfide bond</keyword>
<keyword id="KW-0325">Glycoprotein</keyword>
<keyword id="KW-0391">Immunity</keyword>
<keyword id="KW-0393">Immunoglobulin domain</keyword>
<keyword id="KW-0472">Membrane</keyword>
<keyword id="KW-0597">Phosphoprotein</keyword>
<keyword id="KW-1267">Proteomics identification</keyword>
<keyword id="KW-1185">Reference proteome</keyword>
<keyword id="KW-0677">Repeat</keyword>
<keyword id="KW-0732">Signal</keyword>
<keyword id="KW-0812">Transmembrane</keyword>
<keyword id="KW-1133">Transmembrane helix</keyword>
<reference key="1">
    <citation type="journal article" date="1988" name="J. Exp. Med.">
        <title>CD19, the earliest differentiation antigen of the B cell lineage, bears three extracellular immunoglobulin-like domains and an Epstein-Barr virus-related cytoplasmic tail.</title>
        <authorList>
            <person name="Stamenkovic I."/>
            <person name="Seed B."/>
        </authorList>
    </citation>
    <scope>NUCLEOTIDE SEQUENCE [MRNA] (ISOFORM 1)</scope>
    <scope>VARIANTS VAL-174 AND HIS-514</scope>
</reference>
<reference key="2">
    <citation type="journal article" date="1989" name="J. Immunol.">
        <title>Isolation of cDNAs encoding the CD19 antigen of human and mouse B lymphocytes. A new member of the immunoglobulin superfamily.</title>
        <authorList>
            <person name="Tedder T.F."/>
            <person name="Isaacs C.M."/>
        </authorList>
    </citation>
    <scope>NUCLEOTIDE SEQUENCE [MRNA] (ISOFORM 1)</scope>
    <scope>VARIANTS VAL-174 AND HIS-514</scope>
    <source>
        <tissue>Tonsil</tissue>
    </source>
</reference>
<reference key="3">
    <citation type="journal article" date="1992" name="Mol. Cell. Biol.">
        <title>The promoter of the CD19 gene is a target for the B-cell-specific transcription factor BSAP.</title>
        <authorList>
            <person name="Kozmik Z."/>
            <person name="Wang S."/>
            <person name="Doerfler P."/>
            <person name="Adams B."/>
            <person name="Busslinger M."/>
        </authorList>
    </citation>
    <scope>NUCLEOTIDE SEQUENCE [GENOMIC DNA]</scope>
    <scope>VARIANT VAL-174</scope>
</reference>
<reference key="4">
    <citation type="journal article" date="1992" name="Immunogenetics">
        <title>Structure of the genes encoding the CD19 antigen of human and mouse B lymphocytes.</title>
        <authorList>
            <person name="Zhou L.J."/>
            <person name="Ord D.C."/>
            <person name="Omori S.A."/>
            <person name="Tedder T.F."/>
        </authorList>
    </citation>
    <scope>NUCLEOTIDE SEQUENCE [GENOMIC DNA]</scope>
    <scope>VARIANT VAL-174</scope>
    <source>
        <tissue>Blood</tissue>
    </source>
</reference>
<reference key="5">
    <citation type="journal article" date="2002" name="Genes Immun.">
        <title>Polymorphisms of human CD19 gene: possible association with susceptibility to systemic lupus erythematosus in Japanese.</title>
        <authorList>
            <person name="Kuroki K."/>
            <person name="Tsuchiya N."/>
            <person name="Tsao B.P."/>
            <person name="Grossman J.M."/>
            <person name="Fukazawa T."/>
            <person name="Hagiwara K."/>
            <person name="Kano H."/>
            <person name="Takazoe M."/>
            <person name="Iwata T."/>
            <person name="Hashimoto H."/>
            <person name="Tokunaga K."/>
        </authorList>
    </citation>
    <scope>NUCLEOTIDE SEQUENCE [GENOMIC DNA]</scope>
    <scope>VARIANT VAL-174</scope>
</reference>
<reference key="6">
    <citation type="journal article" date="2004" name="Nat. Genet.">
        <title>Complete sequencing and characterization of 21,243 full-length human cDNAs.</title>
        <authorList>
            <person name="Ota T."/>
            <person name="Suzuki Y."/>
            <person name="Nishikawa T."/>
            <person name="Otsuki T."/>
            <person name="Sugiyama T."/>
            <person name="Irie R."/>
            <person name="Wakamatsu A."/>
            <person name="Hayashi K."/>
            <person name="Sato H."/>
            <person name="Nagai K."/>
            <person name="Kimura K."/>
            <person name="Makita H."/>
            <person name="Sekine M."/>
            <person name="Obayashi M."/>
            <person name="Nishi T."/>
            <person name="Shibahara T."/>
            <person name="Tanaka T."/>
            <person name="Ishii S."/>
            <person name="Yamamoto J."/>
            <person name="Saito K."/>
            <person name="Kawai Y."/>
            <person name="Isono Y."/>
            <person name="Nakamura Y."/>
            <person name="Nagahari K."/>
            <person name="Murakami K."/>
            <person name="Yasuda T."/>
            <person name="Iwayanagi T."/>
            <person name="Wagatsuma M."/>
            <person name="Shiratori A."/>
            <person name="Sudo H."/>
            <person name="Hosoiri T."/>
            <person name="Kaku Y."/>
            <person name="Kodaira H."/>
            <person name="Kondo H."/>
            <person name="Sugawara M."/>
            <person name="Takahashi M."/>
            <person name="Kanda K."/>
            <person name="Yokoi T."/>
            <person name="Furuya T."/>
            <person name="Kikkawa E."/>
            <person name="Omura Y."/>
            <person name="Abe K."/>
            <person name="Kamihara K."/>
            <person name="Katsuta N."/>
            <person name="Sato K."/>
            <person name="Tanikawa M."/>
            <person name="Yamazaki M."/>
            <person name="Ninomiya K."/>
            <person name="Ishibashi T."/>
            <person name="Yamashita H."/>
            <person name="Murakawa K."/>
            <person name="Fujimori K."/>
            <person name="Tanai H."/>
            <person name="Kimata M."/>
            <person name="Watanabe M."/>
            <person name="Hiraoka S."/>
            <person name="Chiba Y."/>
            <person name="Ishida S."/>
            <person name="Ono Y."/>
            <person name="Takiguchi S."/>
            <person name="Watanabe S."/>
            <person name="Yosida M."/>
            <person name="Hotuta T."/>
            <person name="Kusano J."/>
            <person name="Kanehori K."/>
            <person name="Takahashi-Fujii A."/>
            <person name="Hara H."/>
            <person name="Tanase T.-O."/>
            <person name="Nomura Y."/>
            <person name="Togiya S."/>
            <person name="Komai F."/>
            <person name="Hara R."/>
            <person name="Takeuchi K."/>
            <person name="Arita M."/>
            <person name="Imose N."/>
            <person name="Musashino K."/>
            <person name="Yuuki H."/>
            <person name="Oshima A."/>
            <person name="Sasaki N."/>
            <person name="Aotsuka S."/>
            <person name="Yoshikawa Y."/>
            <person name="Matsunawa H."/>
            <person name="Ichihara T."/>
            <person name="Shiohata N."/>
            <person name="Sano S."/>
            <person name="Moriya S."/>
            <person name="Momiyama H."/>
            <person name="Satoh N."/>
            <person name="Takami S."/>
            <person name="Terashima Y."/>
            <person name="Suzuki O."/>
            <person name="Nakagawa S."/>
            <person name="Senoh A."/>
            <person name="Mizoguchi H."/>
            <person name="Goto Y."/>
            <person name="Shimizu F."/>
            <person name="Wakebe H."/>
            <person name="Hishigaki H."/>
            <person name="Watanabe T."/>
            <person name="Sugiyama A."/>
            <person name="Takemoto M."/>
            <person name="Kawakami B."/>
            <person name="Yamazaki M."/>
            <person name="Watanabe K."/>
            <person name="Kumagai A."/>
            <person name="Itakura S."/>
            <person name="Fukuzumi Y."/>
            <person name="Fujimori Y."/>
            <person name="Komiyama M."/>
            <person name="Tashiro H."/>
            <person name="Tanigami A."/>
            <person name="Fujiwara T."/>
            <person name="Ono T."/>
            <person name="Yamada K."/>
            <person name="Fujii Y."/>
            <person name="Ozaki K."/>
            <person name="Hirao M."/>
            <person name="Ohmori Y."/>
            <person name="Kawabata A."/>
            <person name="Hikiji T."/>
            <person name="Kobatake N."/>
            <person name="Inagaki H."/>
            <person name="Ikema Y."/>
            <person name="Okamoto S."/>
            <person name="Okitani R."/>
            <person name="Kawakami T."/>
            <person name="Noguchi S."/>
            <person name="Itoh T."/>
            <person name="Shigeta K."/>
            <person name="Senba T."/>
            <person name="Matsumura K."/>
            <person name="Nakajima Y."/>
            <person name="Mizuno T."/>
            <person name="Morinaga M."/>
            <person name="Sasaki M."/>
            <person name="Togashi T."/>
            <person name="Oyama M."/>
            <person name="Hata H."/>
            <person name="Watanabe M."/>
            <person name="Komatsu T."/>
            <person name="Mizushima-Sugano J."/>
            <person name="Satoh T."/>
            <person name="Shirai Y."/>
            <person name="Takahashi Y."/>
            <person name="Nakagawa K."/>
            <person name="Okumura K."/>
            <person name="Nagase T."/>
            <person name="Nomura N."/>
            <person name="Kikuchi H."/>
            <person name="Masuho Y."/>
            <person name="Yamashita R."/>
            <person name="Nakai K."/>
            <person name="Yada T."/>
            <person name="Nakamura Y."/>
            <person name="Ohara O."/>
            <person name="Isogai T."/>
            <person name="Sugano S."/>
        </authorList>
    </citation>
    <scope>NUCLEOTIDE SEQUENCE [LARGE SCALE MRNA] (ISOFORM 2)</scope>
    <scope>VARIANT VAL-174</scope>
    <source>
        <tissue>Spleen</tissue>
    </source>
</reference>
<reference key="7">
    <citation type="submission" date="2006-10" db="EMBL/GenBank/DDBJ databases">
        <authorList>
            <person name="Livingston R.J."/>
            <person name="Shaffer T."/>
            <person name="McFarland I."/>
            <person name="Nguyen C.P."/>
            <person name="Stanaway I.B."/>
            <person name="Rajkumar N."/>
            <person name="Johnson E.J."/>
            <person name="da Ponte S.H."/>
            <person name="Willa H."/>
            <person name="Ahearn M.O."/>
            <person name="Bertucci C."/>
            <person name="Acklestad J."/>
            <person name="Carroll A."/>
            <person name="Swanson J."/>
            <person name="Gildersleeve H.I."/>
            <person name="Nickerson D.A."/>
        </authorList>
    </citation>
    <scope>NUCLEOTIDE SEQUENCE [GENOMIC DNA]</scope>
    <scope>VARIANT VAL-174</scope>
</reference>
<reference key="8">
    <citation type="journal article" date="2004" name="Nature">
        <title>The sequence and analysis of duplication-rich human chromosome 16.</title>
        <authorList>
            <person name="Martin J."/>
            <person name="Han C."/>
            <person name="Gordon L.A."/>
            <person name="Terry A."/>
            <person name="Prabhakar S."/>
            <person name="She X."/>
            <person name="Xie G."/>
            <person name="Hellsten U."/>
            <person name="Chan Y.M."/>
            <person name="Altherr M."/>
            <person name="Couronne O."/>
            <person name="Aerts A."/>
            <person name="Bajorek E."/>
            <person name="Black S."/>
            <person name="Blumer H."/>
            <person name="Branscomb E."/>
            <person name="Brown N.C."/>
            <person name="Bruno W.J."/>
            <person name="Buckingham J.M."/>
            <person name="Callen D.F."/>
            <person name="Campbell C.S."/>
            <person name="Campbell M.L."/>
            <person name="Campbell E.W."/>
            <person name="Caoile C."/>
            <person name="Challacombe J.F."/>
            <person name="Chasteen L.A."/>
            <person name="Chertkov O."/>
            <person name="Chi H.C."/>
            <person name="Christensen M."/>
            <person name="Clark L.M."/>
            <person name="Cohn J.D."/>
            <person name="Denys M."/>
            <person name="Detter J.C."/>
            <person name="Dickson M."/>
            <person name="Dimitrijevic-Bussod M."/>
            <person name="Escobar J."/>
            <person name="Fawcett J.J."/>
            <person name="Flowers D."/>
            <person name="Fotopulos D."/>
            <person name="Glavina T."/>
            <person name="Gomez M."/>
            <person name="Gonzales E."/>
            <person name="Goodstein D."/>
            <person name="Goodwin L.A."/>
            <person name="Grady D.L."/>
            <person name="Grigoriev I."/>
            <person name="Groza M."/>
            <person name="Hammon N."/>
            <person name="Hawkins T."/>
            <person name="Haydu L."/>
            <person name="Hildebrand C.E."/>
            <person name="Huang W."/>
            <person name="Israni S."/>
            <person name="Jett J."/>
            <person name="Jewett P.B."/>
            <person name="Kadner K."/>
            <person name="Kimball H."/>
            <person name="Kobayashi A."/>
            <person name="Krawczyk M.-C."/>
            <person name="Leyba T."/>
            <person name="Longmire J.L."/>
            <person name="Lopez F."/>
            <person name="Lou Y."/>
            <person name="Lowry S."/>
            <person name="Ludeman T."/>
            <person name="Manohar C.F."/>
            <person name="Mark G.A."/>
            <person name="McMurray K.L."/>
            <person name="Meincke L.J."/>
            <person name="Morgan J."/>
            <person name="Moyzis R.K."/>
            <person name="Mundt M.O."/>
            <person name="Munk A.C."/>
            <person name="Nandkeshwar R.D."/>
            <person name="Pitluck S."/>
            <person name="Pollard M."/>
            <person name="Predki P."/>
            <person name="Parson-Quintana B."/>
            <person name="Ramirez L."/>
            <person name="Rash S."/>
            <person name="Retterer J."/>
            <person name="Ricke D.O."/>
            <person name="Robinson D.L."/>
            <person name="Rodriguez A."/>
            <person name="Salamov A."/>
            <person name="Saunders E.H."/>
            <person name="Scott D."/>
            <person name="Shough T."/>
            <person name="Stallings R.L."/>
            <person name="Stalvey M."/>
            <person name="Sutherland R.D."/>
            <person name="Tapia R."/>
            <person name="Tesmer J.G."/>
            <person name="Thayer N."/>
            <person name="Thompson L.S."/>
            <person name="Tice H."/>
            <person name="Torney D.C."/>
            <person name="Tran-Gyamfi M."/>
            <person name="Tsai M."/>
            <person name="Ulanovsky L.E."/>
            <person name="Ustaszewska A."/>
            <person name="Vo N."/>
            <person name="White P.S."/>
            <person name="Williams A.L."/>
            <person name="Wills P.L."/>
            <person name="Wu J.-R."/>
            <person name="Wu K."/>
            <person name="Yang J."/>
            <person name="DeJong P."/>
            <person name="Bruce D."/>
            <person name="Doggett N.A."/>
            <person name="Deaven L."/>
            <person name="Schmutz J."/>
            <person name="Grimwood J."/>
            <person name="Richardson P."/>
            <person name="Rokhsar D.S."/>
            <person name="Eichler E.E."/>
            <person name="Gilna P."/>
            <person name="Lucas S.M."/>
            <person name="Myers R.M."/>
            <person name="Rubin E.M."/>
            <person name="Pennacchio L.A."/>
        </authorList>
    </citation>
    <scope>NUCLEOTIDE SEQUENCE [LARGE SCALE GENOMIC DNA]</scope>
</reference>
<reference key="9">
    <citation type="submission" date="2005-07" db="EMBL/GenBank/DDBJ databases">
        <authorList>
            <person name="Mural R.J."/>
            <person name="Istrail S."/>
            <person name="Sutton G.G."/>
            <person name="Florea L."/>
            <person name="Halpern A.L."/>
            <person name="Mobarry C.M."/>
            <person name="Lippert R."/>
            <person name="Walenz B."/>
            <person name="Shatkay H."/>
            <person name="Dew I."/>
            <person name="Miller J.R."/>
            <person name="Flanigan M.J."/>
            <person name="Edwards N.J."/>
            <person name="Bolanos R."/>
            <person name="Fasulo D."/>
            <person name="Halldorsson B.V."/>
            <person name="Hannenhalli S."/>
            <person name="Turner R."/>
            <person name="Yooseph S."/>
            <person name="Lu F."/>
            <person name="Nusskern D.R."/>
            <person name="Shue B.C."/>
            <person name="Zheng X.H."/>
            <person name="Zhong F."/>
            <person name="Delcher A.L."/>
            <person name="Huson D.H."/>
            <person name="Kravitz S.A."/>
            <person name="Mouchard L."/>
            <person name="Reinert K."/>
            <person name="Remington K.A."/>
            <person name="Clark A.G."/>
            <person name="Waterman M.S."/>
            <person name="Eichler E.E."/>
            <person name="Adams M.D."/>
            <person name="Hunkapiller M.W."/>
            <person name="Myers E.W."/>
            <person name="Venter J.C."/>
        </authorList>
    </citation>
    <scope>NUCLEOTIDE SEQUENCE [LARGE SCALE GENOMIC DNA]</scope>
    <scope>VARIANT VAL-174</scope>
</reference>
<reference key="10">
    <citation type="journal article" date="2004" name="Genome Res.">
        <title>The status, quality, and expansion of the NIH full-length cDNA project: the Mammalian Gene Collection (MGC).</title>
        <authorList>
            <consortium name="The MGC Project Team"/>
        </authorList>
    </citation>
    <scope>NUCLEOTIDE SEQUENCE [MRNA] (ISOFORM 1)</scope>
    <source>
        <tissue>B-cell</tissue>
    </source>
</reference>
<reference key="11">
    <citation type="journal article" date="1989" name="Cell. Immunol.">
        <title>Regulatory role of CD19 molecules in B-cell activation and differentiation.</title>
        <authorList>
            <person name="de Rie M.A."/>
            <person name="Schumacher T.N."/>
            <person name="van Schijndel G.M."/>
            <person name="van Lier R.A."/>
            <person name="Miedema F."/>
        </authorList>
    </citation>
    <scope>FUNCTION</scope>
    <scope>SUBCELLULAR LOCATION</scope>
    <scope>TISSUE SPECIFICITY</scope>
</reference>
<reference key="12">
    <citation type="journal article" date="1991" name="J. Exp. Med.">
        <title>Intersection of the complement and immune systems: a signal transduction complex of the B lymphocyte-containing complement receptor type 2 and CD19.</title>
        <authorList>
            <person name="Matsumoto A.K."/>
            <person name="Kopicky-Burd J."/>
            <person name="Carter R.H."/>
            <person name="Tuveson D.A."/>
            <person name="Tedder T.F."/>
            <person name="Fearon D.T."/>
        </authorList>
    </citation>
    <scope>INTERACTION WITH CR2</scope>
    <scope>SUBCELLULAR LOCATION</scope>
</reference>
<reference key="13">
    <citation type="journal article" date="1992" name="J. Immunol.">
        <title>The CD19/CD21 signal transducing complex of human B lymphocytes includes the target of antiproliferative antibody-1 and Leu-13 molecules.</title>
        <authorList>
            <person name="Bradbury L.E."/>
            <person name="Kansas G.S."/>
            <person name="Levy S."/>
            <person name="Evans R.L."/>
            <person name="Tedder T.F."/>
        </authorList>
    </citation>
    <scope>IDENTIFICATION IN A COMPLEX WITH CR2; CD81 AND IFITM1</scope>
    <scope>SUBCELLULAR LOCATION</scope>
</reference>
<reference key="14">
    <citation type="journal article" date="1992" name="Science">
        <title>CD19: lowering the threshold for antigen receptor stimulation of B lymphocytes.</title>
        <authorList>
            <person name="Carter R.H."/>
            <person name="Fearon D.T."/>
        </authorList>
    </citation>
    <scope>FUNCTION</scope>
    <scope>SUBCELLULAR LOCATION</scope>
</reference>
<reference key="15">
    <citation type="journal article" date="1993" name="Biochem. Biophys. Res. Commun.">
        <title>CD19 is a substrate of the antigen receptor-associated protein tyrosine kinase in human B cells.</title>
        <authorList>
            <person name="Roifman C.M."/>
            <person name="Ke S."/>
        </authorList>
    </citation>
    <scope>PHOSPHORYLATION</scope>
    <scope>INTERACTION WITH LYN</scope>
</reference>
<reference key="16">
    <citation type="journal article" date="1993" name="EMBO J.">
        <title>Tyrosine phosphorylation of CD19 in pre-B and mature B cells.</title>
        <authorList>
            <person name="Chalupny N.J."/>
            <person name="Kanner S.B."/>
            <person name="Schieven G.L."/>
            <person name="Wee S."/>
            <person name="Gilliland L.K."/>
            <person name="Aruffo A."/>
            <person name="Ledbetter J.A."/>
        </authorList>
    </citation>
    <scope>PHOSPHORYLATION</scope>
</reference>
<reference key="17">
    <citation type="journal article" date="1993" name="Science">
        <title>CD19 of B cells as a surrogate kinase insert region to bind phosphatidylinositol 3-kinase.</title>
        <authorList>
            <person name="Tuveson D.A."/>
            <person name="Carter R.H."/>
            <person name="Soltoff S.P."/>
            <person name="Fearon D.T."/>
        </authorList>
    </citation>
    <scope>INTERACTION WITH PHOSPHATIDYLINOSITOL 3-KINASE 85 KDA REGULATORY SUBUNIT PIK3R</scope>
    <scope>PHOSPHORYLATION AT TYR-500 AND TYR-531</scope>
    <scope>MUTAGENESIS OF TYR-500 AND TYR-531</scope>
</reference>
<reference key="18">
    <citation type="journal article" date="1997" name="J. Exp. Med.">
        <title>Qualitative regulation of B cell antigen receptor signaling by CD19: selective requirement for PI3-kinase activation, inositol-1,4,5-trisphosphate production and Ca2+ mobilization.</title>
        <authorList>
            <person name="Buhl A.M."/>
            <person name="Pleiman C.M."/>
            <person name="Rickert R.C."/>
            <person name="Cambier J.C."/>
        </authorList>
    </citation>
    <scope>FUNCTION</scope>
    <scope>SUBCELLULAR LOCATION</scope>
    <scope>MUTAGENESIS OF TYR-500 AND TYR-531</scope>
</reference>
<reference key="19">
    <citation type="journal article" date="1997" name="J. Immunol.">
        <title>Regulation of B lymphocyte development and activation by the CD19/CD21/CD81/Leu 13 complex requires the cytoplasmic domain of CD19.</title>
        <authorList>
            <person name="Sato S."/>
            <person name="Miller A.S."/>
            <person name="Howard M.C."/>
            <person name="Tedder T.F."/>
        </authorList>
    </citation>
    <scope>FUNCTION</scope>
    <scope>MUTAGENESIS OF 339-GLY--ARG-556</scope>
    <scope>SUBCELLULAR LOCATION</scope>
</reference>
<reference key="20">
    <citation type="journal article" date="2000" name="J. Immunol.">
        <title>Systematic analysis of the role of CD19 cytoplasmic tyrosines in enhancement of activation in Daudi human B cells: clustering of phospholipase C and Vav and of Grb2 and Sos with different CD19 tyrosines.</title>
        <authorList>
            <person name="Brooks S.R."/>
            <person name="Li X."/>
            <person name="Volanakis E.J."/>
            <person name="Carter R.H."/>
        </authorList>
    </citation>
    <scope>INTERACTION WITH GRB2; SOS; VAV AND PLCG2</scope>
    <scope>PHOSPHORYLATION AT TYR-348; TYR-378; TYR-409 AND TYR-439</scope>
</reference>
<reference key="21">
    <citation type="journal article" date="2002" name="Immunity">
        <title>The physiologic role of CD19 cytoplasmic tyrosines.</title>
        <authorList>
            <person name="Wang Y."/>
            <person name="Brooks S.R."/>
            <person name="Li X."/>
            <person name="Anzelon A.N."/>
            <person name="Rickert R.C."/>
            <person name="Carter R.H."/>
        </authorList>
    </citation>
    <scope>FUNCTION</scope>
    <scope>MUTAGENESIS OF TYR-348; TYR-378; TYR-409; TYR-421; TYR-439; TYR-461; TYR-500 AND TYR-531</scope>
    <scope>PHOSPHORYLATION</scope>
</reference>
<reference key="22">
    <citation type="journal article" date="2006" name="Mol. Cell. Biol.">
        <title>Building of the tetraspanin web: distinct structural domains of CD81 function in different cellular compartments.</title>
        <authorList>
            <person name="Shoham T."/>
            <person name="Rajapaksa R."/>
            <person name="Kuo C.C."/>
            <person name="Haimovich J."/>
            <person name="Levy S."/>
        </authorList>
    </citation>
    <scope>INTERACTION WITH CD81</scope>
</reference>
<reference key="23">
    <citation type="journal article" date="2006" name="N. Engl. J. Med.">
        <title>An antibody-deficiency syndrome due to mutations in the CD19 gene.</title>
        <authorList>
            <person name="van Zelm M.C."/>
            <person name="Reisli I."/>
            <person name="van der Burg M."/>
            <person name="Castano D."/>
            <person name="van Noesel C.J.M."/>
            <person name="van Tol M.J.D."/>
            <person name="Woellner C."/>
            <person name="Grimbacher B."/>
            <person name="Patino P.J."/>
            <person name="van Dongen J.J.M."/>
            <person name="Franco J.L."/>
        </authorList>
    </citation>
    <scope>INVOLVEMENT IN CVID3</scope>
    <scope>FUNCTION</scope>
    <scope>SUBCELLULAR LOCATION</scope>
    <scope>TISSUE SPECIFICITY</scope>
</reference>
<reference key="24">
    <citation type="journal article" date="2007" name="Science">
        <title>ATM and ATR substrate analysis reveals extensive protein networks responsive to DNA damage.</title>
        <authorList>
            <person name="Matsuoka S."/>
            <person name="Ballif B.A."/>
            <person name="Smogorzewska A."/>
            <person name="McDonald E.R. III"/>
            <person name="Hurov K.E."/>
            <person name="Luo J."/>
            <person name="Bakalarski C.E."/>
            <person name="Zhao Z."/>
            <person name="Solimini N."/>
            <person name="Lerenthal Y."/>
            <person name="Shiloh Y."/>
            <person name="Gygi S.P."/>
            <person name="Elledge S.J."/>
        </authorList>
    </citation>
    <scope>IDENTIFICATION BY MASS SPECTROMETRY [LARGE SCALE ANALYSIS]</scope>
    <source>
        <tissue>Embryonic kidney</tissue>
    </source>
</reference>
<reference key="25">
    <citation type="journal article" date="2018" name="Sci. Rep.">
        <title>Grb2 and GRAP connect the B cell antigen receptor to Erk MAP kinase activation in human B cells.</title>
        <authorList>
            <person name="Vanshylla K."/>
            <person name="Bartsch C."/>
            <person name="Hitzing C."/>
            <person name="Kruempelmann L."/>
            <person name="Wienands J."/>
            <person name="Engels N."/>
        </authorList>
    </citation>
    <scope>FUNCTION</scope>
    <scope>INTERACTION WITH GRB2</scope>
</reference>
<reference evidence="29" key="26">
    <citation type="journal article" date="2018" name="Proteins">
        <title>Crystal structure of B-cell co-receptor CD19 in complex with antibody B43 reveals an unexpected fold.</title>
        <authorList>
            <person name="Teplyakov A."/>
            <person name="Obmolova G."/>
            <person name="Luo J."/>
            <person name="Gilliland G.L."/>
        </authorList>
    </citation>
    <scope>X-RAY CRYSTALLOGRAPHY (3.00 ANGSTROMS) OF 21-277</scope>
    <scope>GLYCOSYLATION AT ASN-86 AND ASN-125</scope>
    <scope>DISULFIDE BONDS</scope>
</reference>
<proteinExistence type="evidence at protein level"/>
<organism>
    <name type="scientific">Homo sapiens</name>
    <name type="common">Human</name>
    <dbReference type="NCBI Taxonomy" id="9606"/>
    <lineage>
        <taxon>Eukaryota</taxon>
        <taxon>Metazoa</taxon>
        <taxon>Chordata</taxon>
        <taxon>Craniata</taxon>
        <taxon>Vertebrata</taxon>
        <taxon>Euteleostomi</taxon>
        <taxon>Mammalia</taxon>
        <taxon>Eutheria</taxon>
        <taxon>Euarchontoglires</taxon>
        <taxon>Primates</taxon>
        <taxon>Haplorrhini</taxon>
        <taxon>Catarrhini</taxon>
        <taxon>Hominidae</taxon>
        <taxon>Homo</taxon>
    </lineage>
</organism>
<evidence type="ECO:0000250" key="1">
    <source>
        <dbReference type="UniProtKB" id="P25918"/>
    </source>
</evidence>
<evidence type="ECO:0000255" key="2"/>
<evidence type="ECO:0000256" key="3">
    <source>
        <dbReference type="SAM" id="MobiDB-lite"/>
    </source>
</evidence>
<evidence type="ECO:0000269" key="4">
    <source>
    </source>
</evidence>
<evidence type="ECO:0000269" key="5">
    <source>
    </source>
</evidence>
<evidence type="ECO:0000269" key="6">
    <source>
    </source>
</evidence>
<evidence type="ECO:0000269" key="7">
    <source>
    </source>
</evidence>
<evidence type="ECO:0000269" key="8">
    <source>
    </source>
</evidence>
<evidence type="ECO:0000269" key="9">
    <source>
    </source>
</evidence>
<evidence type="ECO:0000269" key="10">
    <source>
    </source>
</evidence>
<evidence type="ECO:0000269" key="11">
    <source>
    </source>
</evidence>
<evidence type="ECO:0000269" key="12">
    <source>
    </source>
</evidence>
<evidence type="ECO:0000269" key="13">
    <source>
    </source>
</evidence>
<evidence type="ECO:0000269" key="14">
    <source>
    </source>
</evidence>
<evidence type="ECO:0000269" key="15">
    <source>
    </source>
</evidence>
<evidence type="ECO:0000269" key="16">
    <source>
    </source>
</evidence>
<evidence type="ECO:0000269" key="17">
    <source>
    </source>
</evidence>
<evidence type="ECO:0000269" key="18">
    <source>
    </source>
</evidence>
<evidence type="ECO:0000269" key="19">
    <source>
    </source>
</evidence>
<evidence type="ECO:0000269" key="20">
    <source>
    </source>
</evidence>
<evidence type="ECO:0000269" key="21">
    <source>
    </source>
</evidence>
<evidence type="ECO:0000269" key="22">
    <source>
    </source>
</evidence>
<evidence type="ECO:0000269" key="23">
    <source>
    </source>
</evidence>
<evidence type="ECO:0000269" key="24">
    <source>
    </source>
</evidence>
<evidence type="ECO:0000269" key="25">
    <source ref="7"/>
</evidence>
<evidence type="ECO:0000269" key="26">
    <source ref="9"/>
</evidence>
<evidence type="ECO:0000303" key="27">
    <source>
    </source>
</evidence>
<evidence type="ECO:0000305" key="28"/>
<evidence type="ECO:0007744" key="29">
    <source>
        <dbReference type="PDB" id="6AL5"/>
    </source>
</evidence>
<evidence type="ECO:0007829" key="30">
    <source>
        <dbReference type="PDB" id="6AL5"/>
    </source>
</evidence>
<evidence type="ECO:0007829" key="31">
    <source>
        <dbReference type="PDB" id="7URV"/>
    </source>
</evidence>
<accession>P15391</accession>
<accession>A0N0P9</accession>
<accession>F5H635</accession>
<accession>Q96S68</accession>
<accession>Q9BRD6</accession>
<name>CD19_HUMAN</name>
<feature type="signal peptide" evidence="2">
    <location>
        <begin position="1"/>
        <end position="19"/>
    </location>
</feature>
<feature type="chain" id="PRO_0000014648" description="B-lymphocyte antigen CD19">
    <location>
        <begin position="20"/>
        <end position="556"/>
    </location>
</feature>
<feature type="topological domain" description="Extracellular" evidence="2">
    <location>
        <begin position="20"/>
        <end position="291"/>
    </location>
</feature>
<feature type="transmembrane region" description="Helical" evidence="2">
    <location>
        <begin position="292"/>
        <end position="313"/>
    </location>
</feature>
<feature type="topological domain" description="Cytoplasmic" evidence="2">
    <location>
        <begin position="314"/>
        <end position="556"/>
    </location>
</feature>
<feature type="domain" description="Ig-like C2-type 1">
    <location>
        <begin position="20"/>
        <end position="113"/>
    </location>
</feature>
<feature type="domain" description="Ig-like C2-type 2">
    <location>
        <begin position="176"/>
        <end position="277"/>
    </location>
</feature>
<feature type="region of interest" description="Disordered" evidence="3">
    <location>
        <begin position="329"/>
        <end position="355"/>
    </location>
</feature>
<feature type="region of interest" description="Disordered" evidence="3">
    <location>
        <begin position="372"/>
        <end position="497"/>
    </location>
</feature>
<feature type="region of interest" description="Disordered" evidence="3">
    <location>
        <begin position="513"/>
        <end position="556"/>
    </location>
</feature>
<feature type="compositionally biased region" description="Polar residues" evidence="3">
    <location>
        <begin position="343"/>
        <end position="355"/>
    </location>
</feature>
<feature type="compositionally biased region" description="Acidic residues" evidence="3">
    <location>
        <begin position="401"/>
        <end position="422"/>
    </location>
</feature>
<feature type="compositionally biased region" description="Polar residues" evidence="3">
    <location>
        <begin position="423"/>
        <end position="436"/>
    </location>
</feature>
<feature type="compositionally biased region" description="Acidic residues" evidence="3">
    <location>
        <begin position="441"/>
        <end position="454"/>
    </location>
</feature>
<feature type="modified residue" description="Phosphoserine" evidence="1">
    <location>
        <position position="227"/>
    </location>
</feature>
<feature type="modified residue" description="Phosphotyrosine" evidence="4">
    <location>
        <position position="348"/>
    </location>
</feature>
<feature type="modified residue" description="Phosphotyrosine" evidence="4">
    <location>
        <position position="378"/>
    </location>
</feature>
<feature type="modified residue" description="Phosphotyrosine" evidence="4">
    <location>
        <position position="409"/>
    </location>
</feature>
<feature type="modified residue" description="Phosphotyrosine" evidence="4">
    <location>
        <position position="439"/>
    </location>
</feature>
<feature type="modified residue" description="Phosphotyrosine" evidence="20">
    <location>
        <position position="500"/>
    </location>
</feature>
<feature type="modified residue" description="Phosphotyrosine" evidence="20">
    <location>
        <position position="531"/>
    </location>
</feature>
<feature type="glycosylation site" description="N-linked (GlcNAc...) asparagine" evidence="18 29">
    <location>
        <position position="86"/>
    </location>
</feature>
<feature type="glycosylation site" description="N-linked (GlcNAc...) asparagine" evidence="18 29">
    <location>
        <position position="125"/>
    </location>
</feature>
<feature type="glycosylation site" description="N-linked (GlcNAc...) asparagine" evidence="2">
    <location>
        <position position="138"/>
    </location>
</feature>
<feature type="glycosylation site" description="N-linked (GlcNAc...) asparagine" evidence="2">
    <location>
        <position position="181"/>
    </location>
</feature>
<feature type="glycosylation site" description="N-linked (GlcNAc...) asparagine" evidence="2">
    <location>
        <position position="265"/>
    </location>
</feature>
<feature type="disulfide bond" evidence="18 29">
    <location>
        <begin position="38"/>
        <end position="261"/>
    </location>
</feature>
<feature type="disulfide bond" evidence="18 29">
    <location>
        <begin position="97"/>
        <end position="200"/>
    </location>
</feature>
<feature type="disulfide bond" evidence="18 29">
    <location>
        <begin position="134"/>
        <end position="173"/>
    </location>
</feature>
<feature type="splice variant" id="VSP_047194" description="In isoform 2." evidence="27">
    <original>L</original>
    <variation>LA</variation>
    <location>
        <position position="495"/>
    </location>
</feature>
<feature type="sequence variant" id="VAR_026963" description="In dbSNP:rs2904880." evidence="5 7 9 11 15 17 25 26">
    <original>L</original>
    <variation>V</variation>
    <location>
        <position position="174"/>
    </location>
</feature>
<feature type="sequence variant" id="VAR_036987" description="In dbSNP:rs34763945." evidence="15 17">
    <original>R</original>
    <variation>H</variation>
    <location>
        <position position="514"/>
    </location>
</feature>
<feature type="mutagenesis site" description="Abolishes the ability to activate signaling pathways that mediate mobilization of cytoplasmic Ca(2+). Abolishes the ability to restore normal B cell functions and responses to antigenic stimuli." evidence="23">
    <location>
        <begin position="309"/>
        <end position="556"/>
    </location>
</feature>
<feature type="mutagenesis site" description="No effect on the ability to complement impaired B cell development and functions; when associated with F-378." evidence="6">
    <original>Y</original>
    <variation>F</variation>
    <location>
        <position position="348"/>
    </location>
</feature>
<feature type="mutagenesis site" description="No effect on the ability to complement impaired B cell development and functions; when associated with F-348." evidence="6">
    <original>Y</original>
    <variation>F</variation>
    <location>
        <position position="378"/>
    </location>
</feature>
<feature type="mutagenesis site" description="No effect on the ability to complement impaired B cell development and functions; when associated with F-439." evidence="6">
    <original>Y</original>
    <variation>F</variation>
    <location>
        <position position="409"/>
    </location>
</feature>
<feature type="mutagenesis site" description="No effect on the ability to complement impaired B cell development and functions; when associated with F-461." evidence="6">
    <original>Y</original>
    <variation>F</variation>
    <location>
        <position position="421"/>
    </location>
</feature>
<feature type="mutagenesis site" description="No effect on the ability to complement impaired B cell development and functions; when associated with F-409." evidence="6">
    <original>Y</original>
    <variation>F</variation>
    <location>
        <position position="439"/>
    </location>
</feature>
<feature type="mutagenesis site" description="No effect on the ability to complement impaired B cell development and functions; when associated with F-421." evidence="6">
    <original>Y</original>
    <variation>F</variation>
    <location>
        <position position="461"/>
    </location>
</feature>
<feature type="mutagenesis site" description="Strongly reduced tyrosine phosphorylation; when associated with F-531. Abolishes activation of signaling pathways that mediate mobilization of cytoplasmic Ca(2+); when associated with F-531. Abolishes the ability to complement impaired B cell development and functions; when associated with F-531." evidence="6 20 24">
    <original>Y</original>
    <variation>F</variation>
    <location>
        <position position="500"/>
    </location>
</feature>
<feature type="mutagenesis site" description="Strongly reduced tyrosine phosphorylation; when associated with F-500. Abolishes activation of signaling pathways that mediate mobilization of cytoplasmic Ca(2+); when associated with F-500. Abolishes the ability to complement impaired B cell development and functions; when associated with F-500." evidence="6 20 24">
    <original>Y</original>
    <variation>F</variation>
    <location>
        <position position="531"/>
    </location>
</feature>
<feature type="sequence conflict" description="In Ref. 4; AAB60697." evidence="28" ref="4">
    <original>E</original>
    <variation>EG</variation>
    <location>
        <position position="29"/>
    </location>
</feature>
<feature type="sequence conflict" description="In Ref. 2; AAA68490, 3; AAA69966, 4; AAB60697 and 5; BAB60954." evidence="28" ref="2 3 4 5">
    <original>I</original>
    <variation>S</variation>
    <location>
        <position position="80"/>
    </location>
</feature>
<feature type="sequence conflict" description="In Ref. 3; AAA69966." evidence="28" ref="3">
    <original>Q</original>
    <variation>QAFLVLSLPVP</variation>
    <location>
        <position position="186"/>
    </location>
</feature>
<feature type="strand" evidence="30">
    <location>
        <begin position="24"/>
        <end position="29"/>
    </location>
</feature>
<feature type="strand" evidence="30">
    <location>
        <begin position="34"/>
        <end position="36"/>
    </location>
</feature>
<feature type="strand" evidence="30">
    <location>
        <begin position="50"/>
        <end position="55"/>
    </location>
</feature>
<feature type="strand" evidence="30">
    <location>
        <begin position="61"/>
        <end position="75"/>
    </location>
</feature>
<feature type="strand" evidence="30">
    <location>
        <begin position="80"/>
        <end position="84"/>
    </location>
</feature>
<feature type="helix" evidence="31">
    <location>
        <begin position="89"/>
        <end position="91"/>
    </location>
</feature>
<feature type="strand" evidence="30">
    <location>
        <begin position="93"/>
        <end position="100"/>
    </location>
</feature>
<feature type="strand" evidence="30">
    <location>
        <begin position="108"/>
        <end position="115"/>
    </location>
</feature>
<feature type="strand" evidence="30">
    <location>
        <begin position="119"/>
        <end position="125"/>
    </location>
</feature>
<feature type="strand" evidence="30">
    <location>
        <begin position="155"/>
        <end position="160"/>
    </location>
</feature>
<feature type="strand" evidence="30">
    <location>
        <begin position="163"/>
        <end position="166"/>
    </location>
</feature>
<feature type="strand" evidence="30">
    <location>
        <begin position="187"/>
        <end position="190"/>
    </location>
</feature>
<feature type="strand" evidence="30">
    <location>
        <begin position="196"/>
        <end position="198"/>
    </location>
</feature>
<feature type="helix" evidence="30">
    <location>
        <begin position="203"/>
        <end position="205"/>
    </location>
</feature>
<feature type="strand" evidence="30">
    <location>
        <begin position="208"/>
        <end position="218"/>
    </location>
</feature>
<feature type="strand" evidence="30">
    <location>
        <begin position="221"/>
        <end position="230"/>
    </location>
</feature>
<feature type="strand" evidence="30">
    <location>
        <begin position="239"/>
        <end position="242"/>
    </location>
</feature>
<feature type="strand" evidence="30">
    <location>
        <begin position="245"/>
        <end position="250"/>
    </location>
</feature>
<feature type="helix" evidence="30">
    <location>
        <begin position="253"/>
        <end position="255"/>
    </location>
</feature>
<feature type="strand" evidence="30">
    <location>
        <begin position="257"/>
        <end position="262"/>
    </location>
</feature>
<feature type="strand" evidence="30">
    <location>
        <begin position="267"/>
        <end position="275"/>
    </location>
</feature>
<sequence>MPPPRLLFFLLFLTPMEVRPEEPLVVKVEEGDNAVLQCLKGTSDGPTQQLTWSRESPLKPFLKLSLGLPGLGIHMRPLAIWLFIFNVSQQMGGFYLCQPGPPSEKAWQPGWTVNVEGSGELFRWNVSDLGGLGCGLKNRSSEGPSSPSGKLMSPKLYVWAKDRPEIWEGEPPCLPPRDSLNQSLSQDLTMAPGSTLWLSCGVPPDSVSRGPLSWTHVHPKGPKSLLSLELKDDRPARDMWVMETGLLLPRATAQDAGKYYCHRGNLTMSFHLEITARPVLWHWLLRTGGWKVSAVTLAYLIFCLCSLVGILHLQRALVLRRKRKRMTDPTRRFFKVTPPPGSGPQNQYGNVLSLPTPTSGLGRAQRWAAGLGGTAPSYGNPSSDVQADGALGSRSPPGVGPEEEEGEGYEEPDSEEDSEFYENDSNLGQDQLSQDGSGYENPEDEPLGPEDEDSFSNAESYENEDEELTQPVARTMDFLSPHGSAWDPSREATSLGSQSYEDMRGILYAAPQLRSIRGQPGPNHEEDADSYENMDNPDGPDPAWGGGGRMGTWSTR</sequence>
<protein>
    <recommendedName>
        <fullName>B-lymphocyte antigen CD19</fullName>
    </recommendedName>
    <alternativeName>
        <fullName>B-lymphocyte surface antigen B4</fullName>
    </alternativeName>
    <alternativeName>
        <fullName>Differentiation antigen CD19</fullName>
    </alternativeName>
    <alternativeName>
        <fullName>T-cell surface antigen Leu-12</fullName>
    </alternativeName>
    <cdAntigenName>CD19</cdAntigenName>
</protein>